<accession>Q0J649</accession>
<proteinExistence type="evidence at transcript level"/>
<organism>
    <name type="scientific">Oryza sativa subsp. japonica</name>
    <name type="common">Rice</name>
    <dbReference type="NCBI Taxonomy" id="39947"/>
    <lineage>
        <taxon>Eukaryota</taxon>
        <taxon>Viridiplantae</taxon>
        <taxon>Streptophyta</taxon>
        <taxon>Embryophyta</taxon>
        <taxon>Tracheophyta</taxon>
        <taxon>Spermatophyta</taxon>
        <taxon>Magnoliopsida</taxon>
        <taxon>Liliopsida</taxon>
        <taxon>Poales</taxon>
        <taxon>Poaceae</taxon>
        <taxon>BOP clade</taxon>
        <taxon>Oryzoideae</taxon>
        <taxon>Oryzeae</taxon>
        <taxon>Oryzinae</taxon>
        <taxon>Oryza</taxon>
        <taxon>Oryza sativa</taxon>
    </lineage>
</organism>
<evidence type="ECO:0000250" key="1"/>
<evidence type="ECO:0000255" key="2">
    <source>
        <dbReference type="PROSITE-ProRule" id="PRU00404"/>
    </source>
</evidence>
<evidence type="ECO:0000256" key="3">
    <source>
        <dbReference type="SAM" id="MobiDB-lite"/>
    </source>
</evidence>
<evidence type="ECO:0000305" key="4"/>
<sequence>MTFLYITCYCVAFNRKLLVFMQMEKGKHNKGGYSSISGPQVIEKSFNDMSISCTGFGSGSGLGGLNTDTDTFTSRPKGRTSGGTTGAGKGIGMKLGNTKKTNQFLESLKAEGEVIMEDFQPCSLQSRSSPLPPSDPVTVAVEEKLNVAVKRDGGVNNFDVQGTLALLVLNDADGLILLQIESQDIPGLSFKTHPNINKDLFNSQQILGAKDPIRPFPSGQNETPLVKWRIQGMNESSLPLSVNCWPSILGNETYVNIEYEASEMFDLHSVIISIPLPALREAPRVRQIDGEWKYDSRNSVLEWSIILIDQSNRSGSMEFVVPPADPSMFYPISVGFSASNTFSNVKVTGIRPLNEGSNPPKYSQRVRLVADNYQVV</sequence>
<feature type="chain" id="PRO_0000285623" description="Coatomer subunit delta-4">
    <location>
        <begin position="1"/>
        <end position="376"/>
    </location>
</feature>
<feature type="domain" description="MHD" evidence="2">
    <location>
        <begin position="134"/>
        <end position="376"/>
    </location>
</feature>
<feature type="region of interest" description="Disordered" evidence="3">
    <location>
        <begin position="65"/>
        <end position="92"/>
    </location>
</feature>
<feature type="compositionally biased region" description="Gly residues" evidence="3">
    <location>
        <begin position="80"/>
        <end position="92"/>
    </location>
</feature>
<feature type="sequence conflict" description="In Ref. 4; AK106813." evidence="4" ref="4">
    <original>K</original>
    <variation>E</variation>
    <location>
        <position position="89"/>
    </location>
</feature>
<dbReference type="EMBL" id="AP008214">
    <property type="protein sequence ID" value="BAF23566.1"/>
    <property type="molecule type" value="Genomic_DNA"/>
</dbReference>
<dbReference type="EMBL" id="AP014964">
    <property type="status" value="NOT_ANNOTATED_CDS"/>
    <property type="molecule type" value="Genomic_DNA"/>
</dbReference>
<dbReference type="EMBL" id="AK106813">
    <property type="status" value="NOT_ANNOTATED_CDS"/>
    <property type="molecule type" value="mRNA"/>
</dbReference>
<dbReference type="SMR" id="Q0J649"/>
<dbReference type="FunCoup" id="Q0J649">
    <property type="interactions" value="3069"/>
</dbReference>
<dbReference type="STRING" id="39947.Q0J649"/>
<dbReference type="PaxDb" id="39947-Q0J649"/>
<dbReference type="InParanoid" id="Q0J649"/>
<dbReference type="Proteomes" id="UP000000763">
    <property type="component" value="Chromosome 8"/>
</dbReference>
<dbReference type="Proteomes" id="UP000059680">
    <property type="component" value="Chromosome 8"/>
</dbReference>
<dbReference type="GO" id="GO:0030126">
    <property type="term" value="C:COPI vesicle coat"/>
    <property type="evidence" value="ECO:0000318"/>
    <property type="project" value="GO_Central"/>
</dbReference>
<dbReference type="GO" id="GO:0000139">
    <property type="term" value="C:Golgi membrane"/>
    <property type="evidence" value="ECO:0007669"/>
    <property type="project" value="UniProtKB-SubCell"/>
</dbReference>
<dbReference type="GO" id="GO:0006888">
    <property type="term" value="P:endoplasmic reticulum to Golgi vesicle-mediated transport"/>
    <property type="evidence" value="ECO:0000318"/>
    <property type="project" value="GO_Central"/>
</dbReference>
<dbReference type="GO" id="GO:0051645">
    <property type="term" value="P:Golgi localization"/>
    <property type="evidence" value="ECO:0000318"/>
    <property type="project" value="GO_Central"/>
</dbReference>
<dbReference type="GO" id="GO:0015031">
    <property type="term" value="P:protein transport"/>
    <property type="evidence" value="ECO:0007669"/>
    <property type="project" value="UniProtKB-KW"/>
</dbReference>
<dbReference type="GO" id="GO:0006890">
    <property type="term" value="P:retrograde vesicle-mediated transport, Golgi to endoplasmic reticulum"/>
    <property type="evidence" value="ECO:0000318"/>
    <property type="project" value="GO_Central"/>
</dbReference>
<dbReference type="CDD" id="cd09254">
    <property type="entry name" value="AP_delta-COPI_MHD"/>
    <property type="match status" value="1"/>
</dbReference>
<dbReference type="FunFam" id="2.60.40.1170:FF:000007">
    <property type="entry name" value="Coatomer subunit delta"/>
    <property type="match status" value="1"/>
</dbReference>
<dbReference type="FunFam" id="2.60.40.1170:FF:000015">
    <property type="entry name" value="Coatomer subunit delta"/>
    <property type="match status" value="1"/>
</dbReference>
<dbReference type="Gene3D" id="2.60.40.1170">
    <property type="entry name" value="Mu homology domain, subdomain B"/>
    <property type="match status" value="2"/>
</dbReference>
<dbReference type="InterPro" id="IPR036168">
    <property type="entry name" value="AP2_Mu_C_sf"/>
</dbReference>
<dbReference type="InterPro" id="IPR027059">
    <property type="entry name" value="Coatomer_dsu"/>
</dbReference>
<dbReference type="InterPro" id="IPR028565">
    <property type="entry name" value="MHD"/>
</dbReference>
<dbReference type="PANTHER" id="PTHR10121">
    <property type="entry name" value="COATOMER SUBUNIT DELTA"/>
    <property type="match status" value="1"/>
</dbReference>
<dbReference type="PANTHER" id="PTHR10121:SF0">
    <property type="entry name" value="COATOMER SUBUNIT DELTA"/>
    <property type="match status" value="1"/>
</dbReference>
<dbReference type="Pfam" id="PF00928">
    <property type="entry name" value="Adap_comp_sub"/>
    <property type="match status" value="1"/>
</dbReference>
<dbReference type="SUPFAM" id="SSF49447">
    <property type="entry name" value="Second domain of Mu2 adaptin subunit (ap50) of ap2 adaptor"/>
    <property type="match status" value="1"/>
</dbReference>
<dbReference type="PROSITE" id="PS51072">
    <property type="entry name" value="MHD"/>
    <property type="match status" value="1"/>
</dbReference>
<comment type="function">
    <text evidence="1">The coatomer is a cytosolic protein complex that binds to dilysine motifs and reversibly associates with Golgi non-clathrin-coated vesicles, which further mediate biosynthetic protein transport from the ER, via the Golgi up to the trans Golgi network. Coatomer complex is required for budding from Golgi membranes, and is essential for the retrograde Golgi-to-ER transport of dilysine-tagged proteins (By similarity).</text>
</comment>
<comment type="subunit">
    <text evidence="1">Oligomeric complex that consists of at least the alpha, beta, beta', gamma, delta, epsilon and zeta subunits.</text>
</comment>
<comment type="subcellular location">
    <subcellularLocation>
        <location evidence="1">Cytoplasm</location>
    </subcellularLocation>
    <subcellularLocation>
        <location evidence="1">Golgi apparatus membrane</location>
        <topology evidence="1">Peripheral membrane protein</topology>
        <orientation evidence="1">Cytoplasmic side</orientation>
    </subcellularLocation>
    <subcellularLocation>
        <location evidence="1">Cytoplasmic vesicle</location>
        <location evidence="1">COPI-coated vesicle membrane</location>
        <topology evidence="1">Peripheral membrane protein</topology>
        <orientation evidence="1">Cytoplasmic side</orientation>
    </subcellularLocation>
    <text evidence="1">The coatomer is cytoplasmic or polymerized on the cytoplasmic side of the Golgi, as well as on the vesicles/buds originating from it.</text>
</comment>
<comment type="similarity">
    <text evidence="4">Belongs to the adaptor complexes medium subunit family. Delta-COP subfamily.</text>
</comment>
<comment type="sequence caution" evidence="4">
    <conflict type="frameshift">
        <sequence resource="EMBL" id="AK106813"/>
    </conflict>
</comment>
<protein>
    <recommendedName>
        <fullName>Coatomer subunit delta-4</fullName>
    </recommendedName>
    <alternativeName>
        <fullName>Delta-coat protein 4</fullName>
        <shortName>Delta-COP 4</shortName>
    </alternativeName>
</protein>
<name>COPD4_ORYSJ</name>
<keyword id="KW-0963">Cytoplasm</keyword>
<keyword id="KW-0968">Cytoplasmic vesicle</keyword>
<keyword id="KW-0931">ER-Golgi transport</keyword>
<keyword id="KW-0333">Golgi apparatus</keyword>
<keyword id="KW-0472">Membrane</keyword>
<keyword id="KW-0653">Protein transport</keyword>
<keyword id="KW-1185">Reference proteome</keyword>
<keyword id="KW-0813">Transport</keyword>
<reference key="1">
    <citation type="journal article" date="2005" name="Nature">
        <title>The map-based sequence of the rice genome.</title>
        <authorList>
            <consortium name="International rice genome sequencing project (IRGSP)"/>
        </authorList>
    </citation>
    <scope>NUCLEOTIDE SEQUENCE [LARGE SCALE GENOMIC DNA]</scope>
    <source>
        <strain>cv. Nipponbare</strain>
    </source>
</reference>
<reference key="2">
    <citation type="journal article" date="2008" name="Nucleic Acids Res.">
        <title>The rice annotation project database (RAP-DB): 2008 update.</title>
        <authorList>
            <consortium name="The rice annotation project (RAP)"/>
        </authorList>
    </citation>
    <scope>GENOME REANNOTATION</scope>
    <source>
        <strain>cv. Nipponbare</strain>
    </source>
</reference>
<reference key="3">
    <citation type="journal article" date="2013" name="Rice">
        <title>Improvement of the Oryza sativa Nipponbare reference genome using next generation sequence and optical map data.</title>
        <authorList>
            <person name="Kawahara Y."/>
            <person name="de la Bastide M."/>
            <person name="Hamilton J.P."/>
            <person name="Kanamori H."/>
            <person name="McCombie W.R."/>
            <person name="Ouyang S."/>
            <person name="Schwartz D.C."/>
            <person name="Tanaka T."/>
            <person name="Wu J."/>
            <person name="Zhou S."/>
            <person name="Childs K.L."/>
            <person name="Davidson R.M."/>
            <person name="Lin H."/>
            <person name="Quesada-Ocampo L."/>
            <person name="Vaillancourt B."/>
            <person name="Sakai H."/>
            <person name="Lee S.S."/>
            <person name="Kim J."/>
            <person name="Numa H."/>
            <person name="Itoh T."/>
            <person name="Buell C.R."/>
            <person name="Matsumoto T."/>
        </authorList>
    </citation>
    <scope>GENOME REANNOTATION</scope>
    <source>
        <strain>cv. Nipponbare</strain>
    </source>
</reference>
<reference key="4">
    <citation type="journal article" date="2003" name="Science">
        <title>Collection, mapping, and annotation of over 28,000 cDNA clones from japonica rice.</title>
        <authorList>
            <consortium name="The rice full-length cDNA consortium"/>
        </authorList>
    </citation>
    <scope>NUCLEOTIDE SEQUENCE [LARGE SCALE MRNA]</scope>
    <source>
        <strain>cv. Nipponbare</strain>
    </source>
</reference>
<gene>
    <name type="ordered locus">Os08g0368000</name>
    <name type="ordered locus">LOC_Os08g28080</name>
</gene>